<reference key="1">
    <citation type="journal article" date="1992" name="Proc. Natl. Acad. Sci. U.S.A.">
        <title>Cloning of a big tau microtubule-associated protein characteristic of the peripheral nervous system.</title>
        <authorList>
            <person name="Goedert M."/>
            <person name="Spillantini M.G."/>
            <person name="Crowther R.A."/>
        </authorList>
    </citation>
    <scope>NUCLEOTIDE SEQUENCE [MRNA] (ISOFORM TAU-B)</scope>
    <source>
        <tissue>Pheochromocytoma</tissue>
    </source>
</reference>
<reference key="2">
    <citation type="journal article" date="1993" name="J. Cell Sci.">
        <title>Expression of high molecular weight tau in the central and peripheral nervous systems.</title>
        <authorList>
            <person name="Georgieff I.S."/>
            <person name="Liem R.K.H."/>
            <person name="Couchie D."/>
            <person name="Mavilia C."/>
            <person name="Nunez J."/>
            <person name="Shelanski M.L."/>
        </authorList>
    </citation>
    <scope>NUCLEOTIDE SEQUENCE [MRNA] (ISOFORM TAU-B)</scope>
    <source>
        <tissue>Spinal ganglion</tissue>
    </source>
</reference>
<reference key="3">
    <citation type="journal article" date="1994" name="J. Mol. Biol.">
        <title>Complete sequence of 3'-untranslated region of tau from rat central nervous system. Implications for mRNA heterogeneity.</title>
        <authorList>
            <person name="Sadot E."/>
            <person name="Marx R."/>
            <person name="Barg J."/>
            <person name="Behar L."/>
            <person name="Ginzburg I."/>
        </authorList>
    </citation>
    <scope>NUCLEOTIDE SEQUENCE [MRNA] (ISOFORM TAU-F)</scope>
    <source>
        <strain>Wistar</strain>
        <tissue>Brain</tissue>
    </source>
</reference>
<reference key="4">
    <citation type="journal article" date="1989" name="Neuron">
        <title>Developmentally regulated expression of specific tau sequences.</title>
        <authorList>
            <person name="Kosik K.S."/>
            <person name="Orecchio L.D."/>
            <person name="Bakalis S."/>
            <person name="Neve R.L."/>
        </authorList>
    </citation>
    <scope>NUCLEOTIDE SEQUENCE [MRNA] (ISOFORMS TAU-E AND TAU-G)</scope>
    <source>
        <tissue>Brain</tissue>
    </source>
</reference>
<reference key="5">
    <citation type="journal article" date="1989" name="J. Cell Biol.">
        <title>Expression of multiple tau isoforms and microtubule bundle formation in fibroblasts transfected with a single tau cDNA.</title>
        <authorList>
            <person name="Kanai Y."/>
            <person name="Takemura R."/>
            <person name="Oshima T."/>
            <person name="Mori H."/>
            <person name="Ihara Y."/>
            <person name="Yanagisawa M."/>
            <person name="Masaki T."/>
            <person name="Hirokawa N."/>
        </authorList>
    </citation>
    <scope>NUCLEOTIDE SEQUENCE [MRNA] (ISOFORMS TAU-E AND TAU-C)</scope>
</reference>
<reference key="6">
    <citation type="journal article" date="1994" name="J. Neurochem.">
        <title>Diversity of high-molecular-weight tau proteins in different regions of the nervous system.</title>
        <authorList>
            <person name="Mavilia C."/>
            <person name="Couchie D."/>
            <person name="Nunez J."/>
        </authorList>
    </citation>
    <scope>NUCLEOTIDE SEQUENCE OF 360-461 (ISOFORM TAU-A)</scope>
    <scope>NUCLEOTIDE SEQUENCE OF 106-113 AND 368-461 (ISOFORM TAU-D)</scope>
    <source>
        <tissue>Spinal cord</tissue>
    </source>
</reference>
<reference key="7">
    <citation type="journal article" date="1993" name="J. Biol. Chem.">
        <title>In vivo phosphorylation sites in fetal and adult rat tau.</title>
        <authorList>
            <person name="Watanabe A."/>
            <person name="Hasegawa M."/>
            <person name="Suzuki M."/>
            <person name="Takio K."/>
            <person name="Morishima-Kawashima M."/>
            <person name="Titani K."/>
            <person name="Arai T."/>
            <person name="Kosik K.S."/>
            <person name="Ihara Y."/>
        </authorList>
    </citation>
    <scope>PROTEIN SEQUENCE OF 492-501; 506-515; 523-532; 537-551 AND 698-726</scope>
    <scope>PHOSPHORYLATION AT THR-492; SER-509; SER-510; SER-513; THR-528; THR-542; SER-546; SER-707; SER-711 AND SER-715</scope>
</reference>
<reference key="8">
    <citation type="journal article" date="1994" name="Brain Res. Mol. Brain Res.">
        <title>Molecular diversity at the carboxyl terminus of human and rat tau.</title>
        <authorList>
            <person name="Sawa A."/>
            <person name="Oyama F."/>
            <person name="Matsushita M."/>
            <person name="Ihara Y."/>
        </authorList>
    </citation>
    <scope>NUCLEOTIDE SEQUENCE [GENOMIC DNA] OF 697-752 (ISOFORMS TAU-A; TAU-B; TAU-C; TAU-D; TAU-E; TAU-F AND TAU-G)</scope>
    <scope>NUCLEOTIDE SEQUENCE [MRNA] OF 752-775 (ISOFORM TAU-H)</scope>
    <source>
        <strain>Sprague-Dawley</strain>
        <tissue>Brain</tissue>
    </source>
</reference>
<reference key="9">
    <citation type="journal article" date="2010" name="Proc. Natl. Acad. Sci. U.S.A.">
        <title>A role for FKBP52 in Tau protein function.</title>
        <authorList>
            <person name="Chambraud B."/>
            <person name="Sardin E."/>
            <person name="Giustiniani J."/>
            <person name="Dounane O."/>
            <person name="Schumacher M."/>
            <person name="Goedert M."/>
            <person name="Baulieu E.E."/>
        </authorList>
    </citation>
    <scope>INTERACTION WITH FKBP4</scope>
</reference>
<reference key="10">
    <citation type="journal article" date="2012" name="Nat. Commun.">
        <title>Quantitative maps of protein phosphorylation sites across 14 different rat organs and tissues.</title>
        <authorList>
            <person name="Lundby A."/>
            <person name="Secher A."/>
            <person name="Lage K."/>
            <person name="Nordsborg N.B."/>
            <person name="Dmytriyev A."/>
            <person name="Lundby C."/>
            <person name="Olsen J.V."/>
        </authorList>
    </citation>
    <scope>PHOSPHORYLATION [LARGE SCALE ANALYSIS] AT SER-35; SER-50; THR-60; SER-191; SER-204; SER-489; THR-492; SER-509; SER-510; SER-513; SER-525; THR-528; THR-542; SER-546; SER-667; SER-707; SER-711; THR-714; SER-715; SER-727 AND SER-733</scope>
    <scope>IDENTIFICATION BY MASS SPECTROMETRY [LARGE SCALE ANALYSIS]</scope>
</reference>
<organism>
    <name type="scientific">Rattus norvegicus</name>
    <name type="common">Rat</name>
    <dbReference type="NCBI Taxonomy" id="10116"/>
    <lineage>
        <taxon>Eukaryota</taxon>
        <taxon>Metazoa</taxon>
        <taxon>Chordata</taxon>
        <taxon>Craniata</taxon>
        <taxon>Vertebrata</taxon>
        <taxon>Euteleostomi</taxon>
        <taxon>Mammalia</taxon>
        <taxon>Eutheria</taxon>
        <taxon>Euarchontoglires</taxon>
        <taxon>Glires</taxon>
        <taxon>Rodentia</taxon>
        <taxon>Myomorpha</taxon>
        <taxon>Muroidea</taxon>
        <taxon>Muridae</taxon>
        <taxon>Murinae</taxon>
        <taxon>Rattus</taxon>
    </lineage>
</organism>
<protein>
    <recommendedName>
        <fullName evidence="14">Microtubule-associated protein tau</fullName>
    </recommendedName>
    <alternativeName>
        <fullName>Neurofibrillary tangle protein</fullName>
    </alternativeName>
    <alternativeName>
        <fullName>Paired helical filament-tau</fullName>
        <shortName>PHF-tau</shortName>
    </alternativeName>
</protein>
<sequence length="752" mass="78564">MAEPRQEFDTMEDQAGDYTMLQDQEGDMDHGLKESPPQPPADDGSEEPGSETSDAKSTPTAEDVTAPLVEERAPDKQATAQSHTEIPEGTTAEEAGIGDTPNMEDQAAGHVTQEPQKVEIFSQSLLVEPGRREGQAPDSGISDWTHQQVPSMSGAPLPPQGLREATHQPLGTRPEDVERSHPASELLWQESPQKEAWGKDRLGSEEEVDEDITMDESSQESPPSQASLAPGTATPQARSVSASGVSGETTSIPGFPAEGSIPLPADFFSKVSAETQASPPEGPGTGPSEEGHEAAPEFTFHVEIKASAPKEQDLEGATVVGAPAEEQKARGPSVGKGTKEASLLEPTDKQPAAGLPGRPVSRVPQLKARVAGVSKDRTGNDEKKAKTSTPSCAKTPSNRPCLSPTRPTPGSSDPLIKPSSPAVCPEPATSPKYVSSVTPRNGSPGTKQMKLKGADGKTGAKIATPRGAATPGQKGTSNATRIPAKTTPSPKTPPGSGEPPKSGERSGYSSPGSPGTPGSRSRTPSLPTPPTREPKKVAVVRTPPKSPSASKSRLQTAPVPMPDLKNVRSKIGSTENLKHQPGGGKVQIINKKLDLSNVQSKCGSKDNIKHVPGGGSVHIVYKPVDLSKVTSKCGSLGNIHHKPGGGQVEVKSEKLDFKDRVQSKIGSLDNITHVPGGGNKKIETHKLTFRENAKAKTDHGAEIVYKSPVVSGDTSPRHLSNVSSTGSIDMVDSPQLATLADEVSASLAKQGL</sequence>
<evidence type="ECO:0000250" key="1"/>
<evidence type="ECO:0000250" key="2">
    <source>
        <dbReference type="UniProtKB" id="P10636"/>
    </source>
</evidence>
<evidence type="ECO:0000250" key="3">
    <source>
        <dbReference type="UniProtKB" id="P10637"/>
    </source>
</evidence>
<evidence type="ECO:0000255" key="4">
    <source>
        <dbReference type="PROSITE-ProRule" id="PRU00824"/>
    </source>
</evidence>
<evidence type="ECO:0000256" key="5">
    <source>
        <dbReference type="SAM" id="MobiDB-lite"/>
    </source>
</evidence>
<evidence type="ECO:0000269" key="6">
    <source>
    </source>
</evidence>
<evidence type="ECO:0000269" key="7">
    <source>
    </source>
</evidence>
<evidence type="ECO:0000303" key="8">
    <source>
    </source>
</evidence>
<evidence type="ECO:0000303" key="9">
    <source>
    </source>
</evidence>
<evidence type="ECO:0000303" key="10">
    <source>
    </source>
</evidence>
<evidence type="ECO:0000303" key="11">
    <source>
    </source>
</evidence>
<evidence type="ECO:0000303" key="12">
    <source>
    </source>
</evidence>
<evidence type="ECO:0000303" key="13">
    <source>
    </source>
</evidence>
<evidence type="ECO:0000305" key="14"/>
<evidence type="ECO:0000312" key="15">
    <source>
        <dbReference type="RGD" id="69329"/>
    </source>
</evidence>
<evidence type="ECO:0007744" key="16">
    <source>
    </source>
</evidence>
<keyword id="KW-0007">Acetylation</keyword>
<keyword id="KW-0025">Alternative splicing</keyword>
<keyword id="KW-1003">Cell membrane</keyword>
<keyword id="KW-0966">Cell projection</keyword>
<keyword id="KW-0963">Cytoplasm</keyword>
<keyword id="KW-0206">Cytoskeleton</keyword>
<keyword id="KW-0903">Direct protein sequencing</keyword>
<keyword id="KW-1015">Disulfide bond</keyword>
<keyword id="KW-1017">Isopeptide bond</keyword>
<keyword id="KW-0472">Membrane</keyword>
<keyword id="KW-0488">Methylation</keyword>
<keyword id="KW-0493">Microtubule</keyword>
<keyword id="KW-0597">Phosphoprotein</keyword>
<keyword id="KW-1185">Reference proteome</keyword>
<keyword id="KW-0677">Repeat</keyword>
<keyword id="KW-0964">Secreted</keyword>
<keyword id="KW-0832">Ubl conjugation</keyword>
<gene>
    <name evidence="15" type="primary">Mapt</name>
    <name type="synonym">Mtapt</name>
    <name type="synonym">Tau</name>
</gene>
<comment type="function">
    <text>Promotes microtubule assembly and stability, and might be involved in the establishment and maintenance of neuronal polarity. The C-terminus binds axonal microtubules while the N-terminus binds neural plasma membrane components, suggesting that tau functions as a linker protein between both. Axonal polarity is predetermined by tau localization (in the neuronal cell) in the domain of the cell body defined by the centrosome. The short isoforms allow plasticity of the cytoskeleton whereas the longer isoforms may preferentially play a role in its stabilization.</text>
</comment>
<comment type="subunit">
    <text evidence="2 3 6">Interacts with MARK1, MARK2, MARK3 and MARK4 (By similarity). Interacts with SQSTM1 when polyubiquitinated (By similarity). Interacts with PSMC2 through SQSTM1 (By similarity). Interacts with FKBP4 (PubMed:20133804). Binds to CSNK1D (By similarity). Interacts with SGK1 (By similarity). Interacts with EPM2A; the interaction dephosphorylates MAPT at Ser-388 (By similarity). Interacts with PIN1 (By similarity). Interacts with LRRK2 (By similarity). Interacts with LRP1, leading to endocytosis; this interaction is reduced in the presence of LRPAP1/RAP (By similarity).</text>
</comment>
<comment type="interaction">
    <interactant intactId="EBI-8758676">
        <id>P19332-5</id>
    </interactant>
    <interactant intactId="EBI-2255561">
        <id>Q61644</id>
        <label>Pacsin1</label>
    </interactant>
    <organismsDiffer>true</organismsDiffer>
    <experiments>6</experiments>
</comment>
<comment type="subcellular location">
    <subcellularLocation>
        <location evidence="2">Cytoplasm</location>
        <location evidence="2">Cytosol</location>
    </subcellularLocation>
    <subcellularLocation>
        <location evidence="2">Cell membrane</location>
        <topology evidence="2">Peripheral membrane protein</topology>
        <orientation evidence="2">Cytoplasmic side</orientation>
    </subcellularLocation>
    <subcellularLocation>
        <location evidence="2">Cytoplasm</location>
        <location evidence="2">Cytoskeleton</location>
    </subcellularLocation>
    <subcellularLocation>
        <location evidence="2">Cell projection</location>
        <location evidence="2">Axon</location>
    </subcellularLocation>
    <subcellularLocation>
        <location evidence="2">Cell projection</location>
        <location evidence="2">Dendrite</location>
    </subcellularLocation>
    <subcellularLocation>
        <location evidence="2">Secreted</location>
    </subcellularLocation>
    <text evidence="2">Mostly found in the axons of neurons, in the cytosol and in association with plasma membrane components. Can be secreted; the secretion is dependent on protein unfolding and facilitated by the cargo receptor TMED10; it results in protein translocation from the cytoplasm into the ERGIC (endoplasmic reticulum-Golgi intermediate compartment) followed by vesicle entry and secretion.</text>
</comment>
<comment type="alternative products">
    <event type="alternative splicing"/>
    <isoform>
        <id>P19332-1</id>
        <name>Tau-A</name>
        <name>SC1</name>
        <sequence type="displayed"/>
    </isoform>
    <isoform>
        <id>P19332-2</id>
        <name>Tau-B</name>
        <name>Big-tau</name>
        <name>HMW-tau</name>
        <sequence type="described" ref="VSP_003194"/>
    </isoform>
    <isoform>
        <id>P19332-3</id>
        <name>Tau-C</name>
        <sequence type="described" ref="VSP_003192 VSP_003193 VSP_003194"/>
    </isoform>
    <isoform>
        <id>P19332-4</id>
        <name>Tau-D</name>
        <name>SC2</name>
        <sequence type="described" ref="VSP_003193"/>
    </isoform>
    <isoform>
        <id>P19332-5</id>
        <name>Tau-E</name>
        <sequence type="described" ref="VSP_003193 VSP_003194"/>
    </isoform>
    <isoform>
        <id>P19332-6</id>
        <name>Tau-F</name>
        <sequence type="described" ref="VSP_003191 VSP_003193 VSP_003194"/>
    </isoform>
    <isoform>
        <id>P19332-7</id>
        <name>Tau-G</name>
        <name>Fetal-tau</name>
        <sequence type="described" ref="VSP_003192 VSP_003193 VSP_003194 VSP_003195"/>
    </isoform>
    <isoform>
        <id>P19332-8</id>
        <name>Tau-H</name>
        <sequence type="described" ref="VSP_003196"/>
    </isoform>
    <text>Additional isoforms seem to exist. Isoforms differ from each other by the presence or absence of up to 4 of the 14 exons. Two different C-termini are obtained either by the retention or the splicing of intron 13/14.</text>
</comment>
<comment type="tissue specificity">
    <text>Expressed in neurons. The larger forms (isoform tau-A and isoform tau-B) are preferentially expressed in the peripheral nervous system while the other are expressed in the central nervous system. Low amounts of the larger forms are also found in limited areas of the CNS.</text>
</comment>
<comment type="developmental stage">
    <text>During the immediate postnatal period, the dorsal root ganglia express all isoforms whereas only the larger forms persist in the adults.</text>
</comment>
<comment type="domain">
    <text>The tau/MAP repeat binds to tubulin. Type I isoforms contain 3 repeats while type II isoforms contain 4 repeats.</text>
</comment>
<comment type="PTM">
    <text evidence="1">Polyubiquitinated. Requires functional TRAF6 and may provoke SQSTM1-dependent degradation by the proteasome (By similarity).</text>
</comment>
<comment type="PTM">
    <text evidence="1 2">Phosphorylated at various serine and threonine residues in S-P or T-P motifs by proline-directed protein kinases (PDPK1, CDK1, CDK5, GSK3, MAPK) (a few sites per protein in interphase, more in mitosis), and at serine residues in K-X-G-S motifs by MAP/microtubule affinity-regulating kinase (MARK1, MARK2, MARK3, MARK4), causing detachment from microtubules, and their disassembly (By similarity). Fetal Tau is much more phosphorylated than adult Tau. Phosphorylation at Ser-573 by BRSK1 and BRSK2 in neurons affects ability to bind microtubules and plays a role in neuron polarization. Phosphorylated by PHK. Dephosphorylation at several serine and threonine residues by the serine/threonine phosphatase PPP5C. Phosphorylation at Ser-204 by SGK1 mediates microtubule depolymerization and neurite formation in hippocampal neurons (By similarity).</text>
</comment>
<accession>P19332</accession>
<accession>Q63567</accession>
<accession>Q63677</accession>
<accession>Q9QW06</accession>
<dbReference type="EMBL" id="M84156">
    <property type="protein sequence ID" value="AAA42204.1"/>
    <property type="molecule type" value="mRNA"/>
</dbReference>
<dbReference type="EMBL" id="X79321">
    <property type="protein sequence ID" value="CAA55889.1"/>
    <property type="molecule type" value="mRNA"/>
</dbReference>
<dbReference type="EMBL" id="D30628">
    <property type="status" value="NOT_ANNOTATED_CDS"/>
    <property type="molecule type" value="Genomic_DNA"/>
</dbReference>
<dbReference type="EMBL" id="D30629">
    <property type="status" value="NOT_ANNOTATED_CDS"/>
    <property type="molecule type" value="mRNA"/>
</dbReference>
<dbReference type="PIR" id="A38235">
    <property type="entry name" value="A38235"/>
</dbReference>
<dbReference type="PIR" id="JS0306">
    <property type="entry name" value="JS0306"/>
</dbReference>
<dbReference type="PIR" id="S46264">
    <property type="entry name" value="S46264"/>
</dbReference>
<dbReference type="BMRB" id="P19332"/>
<dbReference type="SMR" id="P19332"/>
<dbReference type="CORUM" id="P19332"/>
<dbReference type="DIP" id="DIP-41779N"/>
<dbReference type="FunCoup" id="P19332">
    <property type="interactions" value="757"/>
</dbReference>
<dbReference type="IntAct" id="P19332">
    <property type="interactions" value="182"/>
</dbReference>
<dbReference type="MINT" id="P19332"/>
<dbReference type="STRING" id="10116.ENSRNOP00000040951"/>
<dbReference type="BindingDB" id="P19332"/>
<dbReference type="ChEMBL" id="CHEMBL1075117"/>
<dbReference type="GlyGen" id="P19332">
    <property type="glycosylation" value="12 sites, 1 O-linked glycan (6 sites)"/>
</dbReference>
<dbReference type="iPTMnet" id="P19332"/>
<dbReference type="PhosphoSitePlus" id="P19332"/>
<dbReference type="jPOST" id="P19332"/>
<dbReference type="PaxDb" id="10116-ENSRNOP00000006856"/>
<dbReference type="UCSC" id="RGD:69329">
    <molecule id="P19332-1"/>
    <property type="organism name" value="rat"/>
</dbReference>
<dbReference type="AGR" id="RGD:69329"/>
<dbReference type="RGD" id="69329">
    <property type="gene designation" value="Mapt"/>
</dbReference>
<dbReference type="eggNOG" id="KOG2418">
    <property type="taxonomic scope" value="Eukaryota"/>
</dbReference>
<dbReference type="InParanoid" id="P19332"/>
<dbReference type="PhylomeDB" id="P19332"/>
<dbReference type="Reactome" id="R-RNO-264870">
    <property type="pathway name" value="Caspase-mediated cleavage of cytoskeletal proteins"/>
</dbReference>
<dbReference type="Reactome" id="R-RNO-9833482">
    <property type="pathway name" value="PKR-mediated signaling"/>
</dbReference>
<dbReference type="PRO" id="PR:P19332"/>
<dbReference type="Proteomes" id="UP000002494">
    <property type="component" value="Unplaced"/>
</dbReference>
<dbReference type="GO" id="GO:0030673">
    <property type="term" value="C:axolemma"/>
    <property type="evidence" value="ECO:0000266"/>
    <property type="project" value="RGD"/>
</dbReference>
<dbReference type="GO" id="GO:0030424">
    <property type="term" value="C:axon"/>
    <property type="evidence" value="ECO:0000314"/>
    <property type="project" value="UniProtKB"/>
</dbReference>
<dbReference type="GO" id="GO:0044295">
    <property type="term" value="C:axonal growth cone"/>
    <property type="evidence" value="ECO:0000314"/>
    <property type="project" value="UniProtKB"/>
</dbReference>
<dbReference type="GO" id="GO:0005930">
    <property type="term" value="C:axoneme"/>
    <property type="evidence" value="ECO:0000266"/>
    <property type="project" value="RGD"/>
</dbReference>
<dbReference type="GO" id="GO:0044297">
    <property type="term" value="C:cell body"/>
    <property type="evidence" value="ECO:0000266"/>
    <property type="project" value="RGD"/>
</dbReference>
<dbReference type="GO" id="GO:0005737">
    <property type="term" value="C:cytoplasm"/>
    <property type="evidence" value="ECO:0000314"/>
    <property type="project" value="ARUK-UCL"/>
</dbReference>
<dbReference type="GO" id="GO:0036464">
    <property type="term" value="C:cytoplasmic ribonucleoprotein granule"/>
    <property type="evidence" value="ECO:0000266"/>
    <property type="project" value="RGD"/>
</dbReference>
<dbReference type="GO" id="GO:0009898">
    <property type="term" value="C:cytoplasmic side of plasma membrane"/>
    <property type="evidence" value="ECO:0000314"/>
    <property type="project" value="CAFA"/>
</dbReference>
<dbReference type="GO" id="GO:0005829">
    <property type="term" value="C:cytosol"/>
    <property type="evidence" value="ECO:0000314"/>
    <property type="project" value="CAFA"/>
</dbReference>
<dbReference type="GO" id="GO:0030425">
    <property type="term" value="C:dendrite"/>
    <property type="evidence" value="ECO:0000314"/>
    <property type="project" value="RGD"/>
</dbReference>
<dbReference type="GO" id="GO:0005576">
    <property type="term" value="C:extracellular region"/>
    <property type="evidence" value="ECO:0007669"/>
    <property type="project" value="UniProtKB-SubCell"/>
</dbReference>
<dbReference type="GO" id="GO:0097386">
    <property type="term" value="C:glial cell projection"/>
    <property type="evidence" value="ECO:0000266"/>
    <property type="project" value="RGD"/>
</dbReference>
<dbReference type="GO" id="GO:0030426">
    <property type="term" value="C:growth cone"/>
    <property type="evidence" value="ECO:0000250"/>
    <property type="project" value="UniProtKB"/>
</dbReference>
<dbReference type="GO" id="GO:0044304">
    <property type="term" value="C:main axon"/>
    <property type="evidence" value="ECO:0000314"/>
    <property type="project" value="ARUK-UCL"/>
</dbReference>
<dbReference type="GO" id="GO:0016020">
    <property type="term" value="C:membrane"/>
    <property type="evidence" value="ECO:0000266"/>
    <property type="project" value="RGD"/>
</dbReference>
<dbReference type="GO" id="GO:0045121">
    <property type="term" value="C:membrane raft"/>
    <property type="evidence" value="ECO:0000266"/>
    <property type="project" value="RGD"/>
</dbReference>
<dbReference type="GO" id="GO:0005874">
    <property type="term" value="C:microtubule"/>
    <property type="evidence" value="ECO:0000314"/>
    <property type="project" value="CACAO"/>
</dbReference>
<dbReference type="GO" id="GO:0015630">
    <property type="term" value="C:microtubule cytoskeleton"/>
    <property type="evidence" value="ECO:0000314"/>
    <property type="project" value="CAFA"/>
</dbReference>
<dbReference type="GO" id="GO:0097418">
    <property type="term" value="C:neurofibrillary tangle"/>
    <property type="evidence" value="ECO:0000266"/>
    <property type="project" value="RGD"/>
</dbReference>
<dbReference type="GO" id="GO:0043005">
    <property type="term" value="C:neuron projection"/>
    <property type="evidence" value="ECO:0000318"/>
    <property type="project" value="GO_Central"/>
</dbReference>
<dbReference type="GO" id="GO:0043025">
    <property type="term" value="C:neuronal cell body"/>
    <property type="evidence" value="ECO:0000314"/>
    <property type="project" value="RGD"/>
</dbReference>
<dbReference type="GO" id="GO:0034399">
    <property type="term" value="C:nuclear periphery"/>
    <property type="evidence" value="ECO:0000266"/>
    <property type="project" value="RGD"/>
</dbReference>
<dbReference type="GO" id="GO:0005634">
    <property type="term" value="C:nucleus"/>
    <property type="evidence" value="ECO:0000266"/>
    <property type="project" value="RGD"/>
</dbReference>
<dbReference type="GO" id="GO:0005886">
    <property type="term" value="C:plasma membrane"/>
    <property type="evidence" value="ECO:0000314"/>
    <property type="project" value="CAFA"/>
</dbReference>
<dbReference type="GO" id="GO:0014069">
    <property type="term" value="C:postsynaptic density"/>
    <property type="evidence" value="ECO:0000266"/>
    <property type="project" value="RGD"/>
</dbReference>
<dbReference type="GO" id="GO:0036477">
    <property type="term" value="C:somatodendritic compartment"/>
    <property type="evidence" value="ECO:0000266"/>
    <property type="project" value="RGD"/>
</dbReference>
<dbReference type="GO" id="GO:0045298">
    <property type="term" value="C:tubulin complex"/>
    <property type="evidence" value="ECO:0000250"/>
    <property type="project" value="UniProtKB"/>
</dbReference>
<dbReference type="GO" id="GO:0034185">
    <property type="term" value="F:apolipoprotein binding"/>
    <property type="evidence" value="ECO:0000266"/>
    <property type="project" value="RGD"/>
</dbReference>
<dbReference type="GO" id="GO:0003677">
    <property type="term" value="F:DNA binding"/>
    <property type="evidence" value="ECO:0000266"/>
    <property type="project" value="RGD"/>
</dbReference>
<dbReference type="GO" id="GO:0019899">
    <property type="term" value="F:enzyme binding"/>
    <property type="evidence" value="ECO:0000353"/>
    <property type="project" value="UniProtKB"/>
</dbReference>
<dbReference type="GO" id="GO:0031072">
    <property type="term" value="F:heat shock protein binding"/>
    <property type="evidence" value="ECO:0000353"/>
    <property type="project" value="ARUK-UCL"/>
</dbReference>
<dbReference type="GO" id="GO:0051879">
    <property type="term" value="F:Hsp90 protein binding"/>
    <property type="evidence" value="ECO:0000353"/>
    <property type="project" value="ARUK-UCL"/>
</dbReference>
<dbReference type="GO" id="GO:0042802">
    <property type="term" value="F:identical protein binding"/>
    <property type="evidence" value="ECO:0000266"/>
    <property type="project" value="RGD"/>
</dbReference>
<dbReference type="GO" id="GO:0071813">
    <property type="term" value="F:lipoprotein particle binding"/>
    <property type="evidence" value="ECO:0000266"/>
    <property type="project" value="RGD"/>
</dbReference>
<dbReference type="GO" id="GO:0008017">
    <property type="term" value="F:microtubule binding"/>
    <property type="evidence" value="ECO:0000314"/>
    <property type="project" value="CAFA"/>
</dbReference>
<dbReference type="GO" id="GO:0099609">
    <property type="term" value="F:microtubule lateral binding"/>
    <property type="evidence" value="ECO:0000266"/>
    <property type="project" value="RGD"/>
</dbReference>
<dbReference type="GO" id="GO:0019901">
    <property type="term" value="F:protein kinase binding"/>
    <property type="evidence" value="ECO:0000353"/>
    <property type="project" value="RGD"/>
</dbReference>
<dbReference type="GO" id="GO:0051721">
    <property type="term" value="F:protein phosphatase 2A binding"/>
    <property type="evidence" value="ECO:0000353"/>
    <property type="project" value="RGD"/>
</dbReference>
<dbReference type="GO" id="GO:0044877">
    <property type="term" value="F:protein-containing complex binding"/>
    <property type="evidence" value="ECO:0000353"/>
    <property type="project" value="RGD"/>
</dbReference>
<dbReference type="GO" id="GO:0051087">
    <property type="term" value="F:protein-folding chaperone binding"/>
    <property type="evidence" value="ECO:0000353"/>
    <property type="project" value="ARUK-UCL"/>
</dbReference>
<dbReference type="GO" id="GO:0017124">
    <property type="term" value="F:SH3 domain binding"/>
    <property type="evidence" value="ECO:0000266"/>
    <property type="project" value="RGD"/>
</dbReference>
<dbReference type="GO" id="GO:0007628">
    <property type="term" value="P:adult walking behavior"/>
    <property type="evidence" value="ECO:0000266"/>
    <property type="project" value="RGD"/>
</dbReference>
<dbReference type="GO" id="GO:1990000">
    <property type="term" value="P:amyloid fibril formation"/>
    <property type="evidence" value="ECO:0000266"/>
    <property type="project" value="RGD"/>
</dbReference>
<dbReference type="GO" id="GO:0008088">
    <property type="term" value="P:axo-dendritic transport"/>
    <property type="evidence" value="ECO:0000266"/>
    <property type="project" value="RGD"/>
</dbReference>
<dbReference type="GO" id="GO:0048675">
    <property type="term" value="P:axon extension"/>
    <property type="evidence" value="ECO:0000266"/>
    <property type="project" value="RGD"/>
</dbReference>
<dbReference type="GO" id="GO:0007409">
    <property type="term" value="P:axonogenesis"/>
    <property type="evidence" value="ECO:0000266"/>
    <property type="project" value="RGD"/>
</dbReference>
<dbReference type="GO" id="GO:0006974">
    <property type="term" value="P:DNA damage response"/>
    <property type="evidence" value="ECO:0000266"/>
    <property type="project" value="RGD"/>
</dbReference>
<dbReference type="GO" id="GO:0007565">
    <property type="term" value="P:female pregnancy"/>
    <property type="evidence" value="ECO:0000270"/>
    <property type="project" value="RGD"/>
</dbReference>
<dbReference type="GO" id="GO:0048312">
    <property type="term" value="P:intracellular distribution of mitochondria"/>
    <property type="evidence" value="ECO:0000266"/>
    <property type="project" value="RGD"/>
</dbReference>
<dbReference type="GO" id="GO:0046907">
    <property type="term" value="P:intracellular transport"/>
    <property type="evidence" value="ECO:0000266"/>
    <property type="project" value="RGD"/>
</dbReference>
<dbReference type="GO" id="GO:0008631">
    <property type="term" value="P:intrinsic apoptotic signaling pathway in response to oxidative stress"/>
    <property type="evidence" value="ECO:0000314"/>
    <property type="project" value="RGD"/>
</dbReference>
<dbReference type="GO" id="GO:0007613">
    <property type="term" value="P:memory"/>
    <property type="evidence" value="ECO:0000270"/>
    <property type="project" value="RGD"/>
</dbReference>
<dbReference type="GO" id="GO:0000226">
    <property type="term" value="P:microtubule cytoskeleton organization"/>
    <property type="evidence" value="ECO:0000250"/>
    <property type="project" value="UniProtKB"/>
</dbReference>
<dbReference type="GO" id="GO:0007017">
    <property type="term" value="P:microtubule-based process"/>
    <property type="evidence" value="ECO:0000303"/>
    <property type="project" value="RGD"/>
</dbReference>
<dbReference type="GO" id="GO:0047497">
    <property type="term" value="P:mitochondrion transport along microtubule"/>
    <property type="evidence" value="ECO:0000266"/>
    <property type="project" value="RGD"/>
</dbReference>
<dbReference type="GO" id="GO:0051028">
    <property type="term" value="P:mRNA transport"/>
    <property type="evidence" value="ECO:0000315"/>
    <property type="project" value="RGD"/>
</dbReference>
<dbReference type="GO" id="GO:1903748">
    <property type="term" value="P:negative regulation of establishment of protein localization to mitochondrion"/>
    <property type="evidence" value="ECO:0000266"/>
    <property type="project" value="RGD"/>
</dbReference>
<dbReference type="GO" id="GO:0010629">
    <property type="term" value="P:negative regulation of gene expression"/>
    <property type="evidence" value="ECO:0000266"/>
    <property type="project" value="RGD"/>
</dbReference>
<dbReference type="GO" id="GO:0032387">
    <property type="term" value="P:negative regulation of intracellular transport"/>
    <property type="evidence" value="ECO:0000266"/>
    <property type="project" value="RGD"/>
</dbReference>
<dbReference type="GO" id="GO:0090258">
    <property type="term" value="P:negative regulation of mitochondrial fission"/>
    <property type="evidence" value="ECO:0000266"/>
    <property type="project" value="RGD"/>
</dbReference>
<dbReference type="GO" id="GO:0010917">
    <property type="term" value="P:negative regulation of mitochondrial membrane potential"/>
    <property type="evidence" value="ECO:0000266"/>
    <property type="project" value="RGD"/>
</dbReference>
<dbReference type="GO" id="GO:1904428">
    <property type="term" value="P:negative regulation of tubulin deacetylation"/>
    <property type="evidence" value="ECO:0000266"/>
    <property type="project" value="RGD"/>
</dbReference>
<dbReference type="GO" id="GO:0030182">
    <property type="term" value="P:neuron differentiation"/>
    <property type="evidence" value="ECO:0000303"/>
    <property type="project" value="RGD"/>
</dbReference>
<dbReference type="GO" id="GO:0001764">
    <property type="term" value="P:neuron migration"/>
    <property type="evidence" value="ECO:0000266"/>
    <property type="project" value="RGD"/>
</dbReference>
<dbReference type="GO" id="GO:0031175">
    <property type="term" value="P:neuron projection development"/>
    <property type="evidence" value="ECO:0000318"/>
    <property type="project" value="GO_Central"/>
</dbReference>
<dbReference type="GO" id="GO:0045773">
    <property type="term" value="P:positive regulation of axon extension"/>
    <property type="evidence" value="ECO:0000250"/>
    <property type="project" value="UniProtKB"/>
</dbReference>
<dbReference type="GO" id="GO:1900454">
    <property type="term" value="P:positive regulation of long-term synaptic depression"/>
    <property type="evidence" value="ECO:0000315"/>
    <property type="project" value="RGD"/>
</dbReference>
<dbReference type="GO" id="GO:0031116">
    <property type="term" value="P:positive regulation of microtubule polymerization"/>
    <property type="evidence" value="ECO:0000250"/>
    <property type="project" value="UniProtKB"/>
</dbReference>
<dbReference type="GO" id="GO:0010976">
    <property type="term" value="P:positive regulation of neuron projection development"/>
    <property type="evidence" value="ECO:0000315"/>
    <property type="project" value="RGD"/>
</dbReference>
<dbReference type="GO" id="GO:1903829">
    <property type="term" value="P:positive regulation of protein localization"/>
    <property type="evidence" value="ECO:0000266"/>
    <property type="project" value="RGD"/>
</dbReference>
<dbReference type="GO" id="GO:1902474">
    <property type="term" value="P:positive regulation of protein localization to synapse"/>
    <property type="evidence" value="ECO:0000266"/>
    <property type="project" value="RGD"/>
</dbReference>
<dbReference type="GO" id="GO:0032930">
    <property type="term" value="P:positive regulation of superoxide anion generation"/>
    <property type="evidence" value="ECO:0000266"/>
    <property type="project" value="RGD"/>
</dbReference>
<dbReference type="GO" id="GO:0051258">
    <property type="term" value="P:protein polymerization"/>
    <property type="evidence" value="ECO:0000266"/>
    <property type="project" value="RGD"/>
</dbReference>
<dbReference type="GO" id="GO:0010506">
    <property type="term" value="P:regulation of autophagy"/>
    <property type="evidence" value="ECO:0000266"/>
    <property type="project" value="RGD"/>
</dbReference>
<dbReference type="GO" id="GO:0050848">
    <property type="term" value="P:regulation of calcium-mediated signaling"/>
    <property type="evidence" value="ECO:0000266"/>
    <property type="project" value="RGD"/>
</dbReference>
<dbReference type="GO" id="GO:1900034">
    <property type="term" value="P:regulation of cellular response to heat"/>
    <property type="evidence" value="ECO:0000266"/>
    <property type="project" value="RGD"/>
</dbReference>
<dbReference type="GO" id="GO:0070507">
    <property type="term" value="P:regulation of microtubule cytoskeleton organization"/>
    <property type="evidence" value="ECO:0000266"/>
    <property type="project" value="RGD"/>
</dbReference>
<dbReference type="GO" id="GO:0031110">
    <property type="term" value="P:regulation of microtubule polymerization or depolymerization"/>
    <property type="evidence" value="ECO:0000266"/>
    <property type="project" value="RGD"/>
</dbReference>
<dbReference type="GO" id="GO:0060632">
    <property type="term" value="P:regulation of microtubule-based movement"/>
    <property type="evidence" value="ECO:0000266"/>
    <property type="project" value="RGD"/>
</dbReference>
<dbReference type="GO" id="GO:0010288">
    <property type="term" value="P:response to lead ion"/>
    <property type="evidence" value="ECO:0000314"/>
    <property type="project" value="ARUK-UCL"/>
</dbReference>
<dbReference type="GO" id="GO:0007584">
    <property type="term" value="P:response to nutrient"/>
    <property type="evidence" value="ECO:0000314"/>
    <property type="project" value="RGD"/>
</dbReference>
<dbReference type="GO" id="GO:0097435">
    <property type="term" value="P:supramolecular fiber organization"/>
    <property type="evidence" value="ECO:0000266"/>
    <property type="project" value="RGD"/>
</dbReference>
<dbReference type="GO" id="GO:0050808">
    <property type="term" value="P:synapse organization"/>
    <property type="evidence" value="ECO:0000266"/>
    <property type="project" value="RGD"/>
</dbReference>
<dbReference type="InterPro" id="IPR027324">
    <property type="entry name" value="MAP2/MAP4/Tau"/>
</dbReference>
<dbReference type="InterPro" id="IPR001084">
    <property type="entry name" value="MAP_tubulin-bd_rpt"/>
</dbReference>
<dbReference type="InterPro" id="IPR002955">
    <property type="entry name" value="Tau"/>
</dbReference>
<dbReference type="PANTHER" id="PTHR11501">
    <property type="entry name" value="MICROTUBULE-ASSOCIATED PROTEIN"/>
    <property type="match status" value="1"/>
</dbReference>
<dbReference type="PANTHER" id="PTHR11501:SF14">
    <property type="entry name" value="MICROTUBULE-ASSOCIATED PROTEIN TAU"/>
    <property type="match status" value="1"/>
</dbReference>
<dbReference type="Pfam" id="PF00418">
    <property type="entry name" value="Tubulin-binding"/>
    <property type="match status" value="4"/>
</dbReference>
<dbReference type="PRINTS" id="PR01261">
    <property type="entry name" value="TAUPROTEIN"/>
</dbReference>
<dbReference type="PROSITE" id="PS00229">
    <property type="entry name" value="TAU_MAP_1"/>
    <property type="match status" value="4"/>
</dbReference>
<dbReference type="PROSITE" id="PS51491">
    <property type="entry name" value="TAU_MAP_2"/>
    <property type="match status" value="4"/>
</dbReference>
<name>TAU_RAT</name>
<proteinExistence type="evidence at protein level"/>
<feature type="initiator methionine" description="Removed" evidence="2">
    <location>
        <position position="1"/>
    </location>
</feature>
<feature type="chain" id="PRO_0000072746" description="Microtubule-associated protein tau">
    <location>
        <begin position="2"/>
        <end position="752"/>
    </location>
</feature>
<feature type="repeat" description="Tau/MAP 1" evidence="4">
    <location>
        <begin position="555"/>
        <end position="585"/>
    </location>
</feature>
<feature type="repeat" description="Tau/MAP 2" evidence="4">
    <location>
        <begin position="586"/>
        <end position="616"/>
    </location>
</feature>
<feature type="repeat" description="Tau/MAP 3" evidence="4">
    <location>
        <begin position="617"/>
        <end position="647"/>
    </location>
</feature>
<feature type="repeat" description="Tau/MAP 4" evidence="4">
    <location>
        <begin position="648"/>
        <end position="679"/>
    </location>
</feature>
<feature type="region of interest" description="Disordered" evidence="5">
    <location>
        <begin position="1"/>
        <end position="567"/>
    </location>
</feature>
<feature type="compositionally biased region" description="Polar residues" evidence="5">
    <location>
        <begin position="50"/>
        <end position="60"/>
    </location>
</feature>
<feature type="compositionally biased region" description="Polar residues" evidence="5">
    <location>
        <begin position="142"/>
        <end position="151"/>
    </location>
</feature>
<feature type="compositionally biased region" description="Basic and acidic residues" evidence="5">
    <location>
        <begin position="173"/>
        <end position="182"/>
    </location>
</feature>
<feature type="compositionally biased region" description="Basic and acidic residues" evidence="5">
    <location>
        <begin position="192"/>
        <end position="204"/>
    </location>
</feature>
<feature type="compositionally biased region" description="Acidic residues" evidence="5">
    <location>
        <begin position="205"/>
        <end position="218"/>
    </location>
</feature>
<feature type="compositionally biased region" description="Low complexity" evidence="5">
    <location>
        <begin position="219"/>
        <end position="229"/>
    </location>
</feature>
<feature type="compositionally biased region" description="Polar residues" evidence="5">
    <location>
        <begin position="233"/>
        <end position="252"/>
    </location>
</feature>
<feature type="compositionally biased region" description="Basic and acidic residues" evidence="5">
    <location>
        <begin position="289"/>
        <end position="313"/>
    </location>
</feature>
<feature type="compositionally biased region" description="Basic and acidic residues" evidence="5">
    <location>
        <begin position="374"/>
        <end position="385"/>
    </location>
</feature>
<feature type="compositionally biased region" description="Polar residues" evidence="5">
    <location>
        <begin position="387"/>
        <end position="400"/>
    </location>
</feature>
<feature type="compositionally biased region" description="Polar residues" evidence="5">
    <location>
        <begin position="432"/>
        <end position="446"/>
    </location>
</feature>
<feature type="compositionally biased region" description="Low complexity" evidence="5">
    <location>
        <begin position="498"/>
        <end position="525"/>
    </location>
</feature>
<feature type="modified residue" description="N-acetylalanine" evidence="2">
    <location>
        <position position="2"/>
    </location>
</feature>
<feature type="modified residue" description="Phosphotyrosine" evidence="3">
    <location>
        <position position="18"/>
    </location>
</feature>
<feature type="modified residue" description="Phosphoserine" evidence="16">
    <location>
        <position position="35"/>
    </location>
</feature>
<feature type="modified residue" description="Phosphoserine" evidence="16">
    <location>
        <position position="50"/>
    </location>
</feature>
<feature type="modified residue" description="Phosphothreonine" evidence="3">
    <location>
        <position position="58"/>
    </location>
</feature>
<feature type="modified residue" description="Phosphothreonine" evidence="16">
    <location>
        <position position="60"/>
    </location>
</feature>
<feature type="modified residue" description="Phosphothreonine" evidence="3">
    <location>
        <position position="100"/>
    </location>
</feature>
<feature type="modified residue" description="Phosphoserine" evidence="16">
    <location>
        <position position="191"/>
    </location>
</feature>
<feature type="modified residue" description="Phosphoserine" evidence="16">
    <location>
        <position position="204"/>
    </location>
</feature>
<feature type="modified residue" description="Phosphothreonine" evidence="2">
    <location>
        <position position="464"/>
    </location>
</feature>
<feature type="modified residue" description="Omega-N-methylarginine" evidence="3">
    <location>
        <position position="466"/>
    </location>
</feature>
<feature type="modified residue" description="N6,N6-dimethyllysine; alternate" evidence="3">
    <location>
        <position position="474"/>
    </location>
</feature>
<feature type="modified residue" description="N6-acetyllysine; alternate" evidence="3">
    <location>
        <position position="474"/>
    </location>
</feature>
<feature type="modified residue" description="Phosphothreonine" evidence="3">
    <location>
        <position position="480"/>
    </location>
</feature>
<feature type="modified residue" description="Phosphothreonine" evidence="3">
    <location>
        <position position="486"/>
    </location>
</feature>
<feature type="modified residue" description="Phosphothreonine" evidence="3">
    <location>
        <position position="487"/>
    </location>
</feature>
<feature type="modified residue" description="Phosphoserine" evidence="16">
    <location>
        <position position="489"/>
    </location>
</feature>
<feature type="modified residue" description="Phosphothreonine" evidence="7 16">
    <location>
        <position position="492"/>
    </location>
</feature>
<feature type="modified residue" description="Phosphoserine" evidence="3">
    <location>
        <position position="496"/>
    </location>
</feature>
<feature type="modified residue" description="Phosphoserine" evidence="3">
    <location>
        <position position="502"/>
    </location>
</feature>
<feature type="modified residue" description="Phosphoserine" evidence="3">
    <location>
        <position position="506"/>
    </location>
</feature>
<feature type="modified residue" description="Phosphotyrosine" evidence="2">
    <location>
        <position position="508"/>
    </location>
</feature>
<feature type="modified residue" description="Phosphoserine" evidence="7 16">
    <location>
        <position position="509"/>
    </location>
</feature>
<feature type="modified residue" description="Phosphoserine" evidence="7 16">
    <location>
        <position position="510"/>
    </location>
</feature>
<feature type="modified residue" description="Phosphoserine; by CK1, PDPK1 and TTBK1" evidence="7 16">
    <location>
        <position position="513"/>
    </location>
</feature>
<feature type="modified residue" description="Phosphothreonine" evidence="2">
    <location>
        <position position="516"/>
    </location>
</feature>
<feature type="modified residue" description="Phosphothreonine" evidence="2">
    <location>
        <position position="523"/>
    </location>
</feature>
<feature type="modified residue" description="Phosphoserine" evidence="16">
    <location>
        <position position="525"/>
    </location>
</feature>
<feature type="modified residue" description="Phosphothreonine" evidence="16">
    <location>
        <position position="528"/>
    </location>
</feature>
<feature type="modified residue" description="N6-acetyllysine" evidence="3">
    <location>
        <position position="536"/>
    </location>
</feature>
<feature type="modified residue" description="Phosphothreonine" evidence="16">
    <location>
        <position position="542"/>
    </location>
</feature>
<feature type="modified residue" description="Phosphoserine" evidence="7 16">
    <location>
        <position position="546"/>
    </location>
</feature>
<feature type="modified residue" description="Phosphoserine" evidence="2">
    <location>
        <position position="548"/>
    </location>
</feature>
<feature type="modified residue" description="N6-acetyllysine; alternate" evidence="3">
    <location>
        <position position="570"/>
    </location>
</feature>
<feature type="modified residue" description="N6-methyllysine; alternate" evidence="3">
    <location>
        <position position="570"/>
    </location>
</feature>
<feature type="modified residue" description="Phosphoserine" evidence="2">
    <location>
        <position position="573"/>
    </location>
</feature>
<feature type="modified residue" description="N6-acetyllysine; alternate" evidence="3">
    <location>
        <position position="592"/>
    </location>
</feature>
<feature type="modified residue" description="Phosphoserine" evidence="2">
    <location>
        <position position="596"/>
    </location>
</feature>
<feature type="modified residue" description="Phosphoserine" evidence="2">
    <location>
        <position position="600"/>
    </location>
</feature>
<feature type="modified residue" description="N6-acetyllysine" evidence="3">
    <location>
        <position position="601"/>
    </location>
</feature>
<feature type="modified residue" description="Phosphoserine" evidence="2">
    <location>
        <position position="604"/>
    </location>
</feature>
<feature type="modified residue" description="N6-acetyllysine; alternate" evidence="3">
    <location>
        <position position="609"/>
    </location>
</feature>
<feature type="modified residue" description="Phosphoserine" evidence="2">
    <location>
        <position position="616"/>
    </location>
</feature>
<feature type="modified residue" description="N6,N6-dimethyllysine; alternate" evidence="3">
    <location>
        <position position="622"/>
    </location>
</feature>
<feature type="modified residue" description="N6-acetyllysine; alternate" evidence="3">
    <location>
        <position position="622"/>
    </location>
</feature>
<feature type="modified residue" description="N6-acetyllysine; alternate" evidence="3">
    <location>
        <position position="628"/>
    </location>
</feature>
<feature type="modified residue" description="N6-acetyllysine; alternate" evidence="3">
    <location>
        <position position="632"/>
    </location>
</feature>
<feature type="modified residue" description="Phosphoserine" evidence="2">
    <location>
        <position position="635"/>
    </location>
</feature>
<feature type="modified residue" description="N6-acetyllysine; alternate" evidence="3">
    <location>
        <position position="642"/>
    </location>
</feature>
<feature type="modified residue" description="N6-acetyllysine; alternate" evidence="3">
    <location>
        <position position="654"/>
    </location>
</feature>
<feature type="modified residue" description="N6-acetyllysine; alternate" evidence="3">
    <location>
        <position position="658"/>
    </location>
</feature>
<feature type="modified residue" description="Omega-N-methylarginine" evidence="3">
    <location>
        <position position="660"/>
    </location>
</feature>
<feature type="modified residue" description="Phosphoserine" evidence="2">
    <location>
        <position position="663"/>
    </location>
</feature>
<feature type="modified residue" description="Phosphoserine" evidence="16">
    <location>
        <position position="667"/>
    </location>
</feature>
<feature type="modified residue" description="N6-acetyllysine; alternate" evidence="3">
    <location>
        <position position="680"/>
    </location>
</feature>
<feature type="modified residue" description="N6-acetyllysine; alternate" evidence="3">
    <location>
        <position position="696"/>
    </location>
</feature>
<feature type="modified residue" description="Phosphotyrosine" evidence="3">
    <location>
        <position position="705"/>
    </location>
</feature>
<feature type="modified residue" description="Phosphoserine; by CK1 and PDPK1" evidence="7 16">
    <location>
        <position position="707"/>
    </location>
</feature>
<feature type="modified residue" description="Phosphoserine" evidence="7 16">
    <location>
        <position position="711"/>
    </location>
</feature>
<feature type="modified residue" description="Phosphothreonine" evidence="16">
    <location>
        <position position="714"/>
    </location>
</feature>
<feature type="modified residue" description="Phosphoserine; by CK1 and PDPK1" evidence="7 16">
    <location>
        <position position="715"/>
    </location>
</feature>
<feature type="modified residue" description="Phosphoserine" evidence="2">
    <location>
        <position position="720"/>
    </location>
</feature>
<feature type="modified residue" description="Phosphoserine" evidence="16">
    <location>
        <position position="727"/>
    </location>
</feature>
<feature type="modified residue" description="Phosphoserine" evidence="16">
    <location>
        <position position="733"/>
    </location>
</feature>
<feature type="modified residue" description="Phosphothreonine" evidence="2">
    <location>
        <position position="738"/>
    </location>
</feature>
<feature type="disulfide bond" evidence="1">
    <location>
        <begin position="602"/>
        <end position="633"/>
    </location>
</feature>
<feature type="cross-link" description="Glycyl lysine isopeptide (Lys-Gly) (interchain with G-Cter in ubiquitin)" evidence="3">
    <location>
        <position position="33"/>
    </location>
</feature>
<feature type="cross-link" description="Glycyl lysine isopeptide (Lys-Gly) (interchain with G-Cter in ubiquitin)" evidence="2">
    <location>
        <position position="565"/>
    </location>
</feature>
<feature type="cross-link" description="Glycyl lysine isopeptide (Lys-Gly) (interchain with G-Cter in ubiquitin); alternate" evidence="3">
    <location>
        <position position="570"/>
    </location>
</feature>
<feature type="cross-link" description="Glycyl lysine isopeptide (Lys-Gly) (interchain with G-Cter in ubiquitin)" evidence="3">
    <location>
        <position position="578"/>
    </location>
</feature>
<feature type="cross-link" description="Glycyl lysine isopeptide (Lys-Gly) (interchain with G-Cter in ubiquitin); alternate" evidence="3">
    <location>
        <position position="592"/>
    </location>
</feature>
<feature type="cross-link" description="Glycyl lysine isopeptide (Lys-Gly) (interchain with G-Cter in ubiquitin); alternate" evidence="3">
    <location>
        <position position="609"/>
    </location>
</feature>
<feature type="cross-link" description="Glycyl lysine isopeptide (Lys-Gly) (interchain with G-Cter in ubiquitin); alternate" evidence="2">
    <location>
        <position position="622"/>
    </location>
</feature>
<feature type="cross-link" description="Glycyl lysine isopeptide (Lys-Gly) (interchain with G-Cter in ubiquitin); alternate" evidence="3">
    <location>
        <position position="628"/>
    </location>
</feature>
<feature type="cross-link" description="Glycyl lysine isopeptide (Lys-Gly) (interchain with G-Cter in ubiquitin); alternate" evidence="3">
    <location>
        <position position="632"/>
    </location>
</feature>
<feature type="cross-link" description="Glycyl lysine isopeptide (Lys-Gly) (interchain with G-Cter in ubiquitin); alternate" evidence="3">
    <location>
        <position position="642"/>
    </location>
</feature>
<feature type="cross-link" description="Glycyl lysine isopeptide (Lys-Gly) (interchain with G-Cter in ubiquitin); alternate" evidence="3">
    <location>
        <position position="654"/>
    </location>
</feature>
<feature type="cross-link" description="Glycyl lysine isopeptide (Lys-Gly) (interchain with G-Cter in ubiquitin); alternate" evidence="3">
    <location>
        <position position="658"/>
    </location>
</feature>
<feature type="cross-link" description="Glycyl lysine isopeptide (Lys-Gly) (interchain with G-Cter in ubiquitin)" evidence="2">
    <location>
        <position position="664"/>
    </location>
</feature>
<feature type="cross-link" description="Glycyl lysine isopeptide (Lys-Gly) (interchain with G-Cter in ubiquitin); alternate" evidence="3">
    <location>
        <position position="680"/>
    </location>
</feature>
<feature type="cross-link" description="Glycyl lysine isopeptide (Lys-Gly) (interchain with G-Cter in ubiquitin)" evidence="3">
    <location>
        <position position="686"/>
    </location>
</feature>
<feature type="cross-link" description="Glycyl lysine isopeptide (Lys-Gly) (interchain with G-Cter in ubiquitin); alternate" evidence="3">
    <location>
        <position position="696"/>
    </location>
</feature>
<feature type="splice variant" id="VSP_003191" description="In isoform Tau-F." evidence="12">
    <location>
        <begin position="34"/>
        <end position="91"/>
    </location>
</feature>
<feature type="splice variant" id="VSP_003192" description="In isoform Tau-C and isoform Tau-G." evidence="9 10">
    <location>
        <begin position="63"/>
        <end position="91"/>
    </location>
</feature>
<feature type="splice variant" id="VSP_003193" description="In isoform Tau-C, isoform Tau-D, isoform Tau-E, isoform Tau-F and isoform Tau-G." evidence="9 10 12">
    <location>
        <begin position="114"/>
        <end position="367"/>
    </location>
</feature>
<feature type="splice variant" id="VSP_003194" description="In isoform Tau-B, isoform Tau-C, isoform Tau-E, isoform Tau-F and isoform Tau-G." evidence="8 9 10 12 13">
    <location>
        <begin position="387"/>
        <end position="452"/>
    </location>
</feature>
<feature type="splice variant" id="VSP_003195" description="In isoform Tau-G." evidence="10">
    <location>
        <begin position="586"/>
        <end position="616"/>
    </location>
</feature>
<feature type="splice variant" id="VSP_003196" description="In isoform Tau-H." evidence="11">
    <original>L</original>
    <variation>KPVLLSSEVWNYSHDFGHHTDLGL</variation>
    <location>
        <position position="752"/>
    </location>
</feature>
<feature type="sequence conflict" description="In Ref. 2." evidence="14" ref="2">
    <original>F</original>
    <variation>L</variation>
    <location>
        <position position="255"/>
    </location>
</feature>
<feature type="sequence conflict" description="In Ref. 2." evidence="14" ref="2">
    <original>G</original>
    <variation>A</variation>
    <location>
        <position position="284"/>
    </location>
</feature>
<feature type="sequence conflict" description="In Ref. 2." evidence="14" ref="2">
    <original>H</original>
    <variation>D</variation>
    <location>
        <position position="292"/>
    </location>
</feature>
<feature type="sequence conflict" description="In Ref. 2, 3; CAA55889 and 4." evidence="14" ref="2 3 4">
    <original>H</original>
    <variation>Q</variation>
    <location>
        <position position="618"/>
    </location>
</feature>
<feature type="sequence conflict" description="In Ref. 3; CAA55889." evidence="14" ref="3">
    <original>Y</original>
    <variation>H</variation>
    <location>
        <position position="705"/>
    </location>
</feature>
<feature type="sequence conflict" description="In Ref. 2." evidence="14" ref="2">
    <original>P</original>
    <variation>A</variation>
    <location>
        <position position="734"/>
    </location>
</feature>